<reference key="1">
    <citation type="journal article" date="2004" name="Nat. Genet.">
        <title>Evidence in the Legionella pneumophila genome for exploitation of host cell functions and high genome plasticity.</title>
        <authorList>
            <person name="Cazalet C."/>
            <person name="Rusniok C."/>
            <person name="Brueggemann H."/>
            <person name="Zidane N."/>
            <person name="Magnier A."/>
            <person name="Ma L."/>
            <person name="Tichit M."/>
            <person name="Jarraud S."/>
            <person name="Bouchier C."/>
            <person name="Vandenesch F."/>
            <person name="Kunst F."/>
            <person name="Etienne J."/>
            <person name="Glaser P."/>
            <person name="Buchrieser C."/>
        </authorList>
    </citation>
    <scope>NUCLEOTIDE SEQUENCE [LARGE SCALE GENOMIC DNA]</scope>
    <source>
        <strain>Lens</strain>
    </source>
</reference>
<protein>
    <recommendedName>
        <fullName evidence="1">3-methyl-2-oxobutanoate hydroxymethyltransferase</fullName>
        <ecNumber evidence="1">2.1.2.11</ecNumber>
    </recommendedName>
    <alternativeName>
        <fullName evidence="1">Ketopantoate hydroxymethyltransferase</fullName>
        <shortName evidence="1">KPHMT</shortName>
    </alternativeName>
</protein>
<sequence length="262" mass="28660">MKIHDFKIKKQEQKKISMLTCYDYPSACIVAESNIDCVLVGDSVAMAVHGYPTTIMATIEMMELHTQAVARGLGKQFLITDLPFLGHKSSQGHTVENVKRLLQAGAQAVKIEGADKDTCQTISHLVNAGIPVMGHIGLTPQSIHQLGGYKIQGKNSEQAETLLQQATTLEQAGCFAVVIECVPQDLAKTITDSLVIPTIGIGAGPGTDGQVLVWHDMLGLQTSFNPKFVKKYFRAKDHFIEALNSYVQQVQQMHFPANEHSF</sequence>
<accession>Q5WTD7</accession>
<comment type="function">
    <text evidence="1">Catalyzes the reversible reaction in which hydroxymethyl group from 5,10-methylenetetrahydrofolate is transferred onto alpha-ketoisovalerate to form ketopantoate.</text>
</comment>
<comment type="catalytic activity">
    <reaction evidence="1">
        <text>3-methyl-2-oxobutanoate + (6R)-5,10-methylene-5,6,7,8-tetrahydrofolate + H2O = 2-dehydropantoate + (6S)-5,6,7,8-tetrahydrofolate</text>
        <dbReference type="Rhea" id="RHEA:11824"/>
        <dbReference type="ChEBI" id="CHEBI:11561"/>
        <dbReference type="ChEBI" id="CHEBI:11851"/>
        <dbReference type="ChEBI" id="CHEBI:15377"/>
        <dbReference type="ChEBI" id="CHEBI:15636"/>
        <dbReference type="ChEBI" id="CHEBI:57453"/>
        <dbReference type="EC" id="2.1.2.11"/>
    </reaction>
</comment>
<comment type="cofactor">
    <cofactor evidence="1">
        <name>Mg(2+)</name>
        <dbReference type="ChEBI" id="CHEBI:18420"/>
    </cofactor>
    <text evidence="1">Binds 1 Mg(2+) ion per subunit.</text>
</comment>
<comment type="pathway">
    <text evidence="1">Cofactor biosynthesis; (R)-pantothenate biosynthesis; (R)-pantoate from 3-methyl-2-oxobutanoate: step 1/2.</text>
</comment>
<comment type="subunit">
    <text evidence="1">Homodecamer; pentamer of dimers.</text>
</comment>
<comment type="subcellular location">
    <subcellularLocation>
        <location evidence="1">Cytoplasm</location>
    </subcellularLocation>
</comment>
<comment type="similarity">
    <text evidence="1">Belongs to the PanB family.</text>
</comment>
<gene>
    <name evidence="1" type="primary">panB</name>
    <name type="ordered locus">lpl2588</name>
</gene>
<evidence type="ECO:0000255" key="1">
    <source>
        <dbReference type="HAMAP-Rule" id="MF_00156"/>
    </source>
</evidence>
<feature type="chain" id="PRO_0000297285" description="3-methyl-2-oxobutanoate hydroxymethyltransferase">
    <location>
        <begin position="1"/>
        <end position="262"/>
    </location>
</feature>
<feature type="active site" description="Proton acceptor" evidence="1">
    <location>
        <position position="180"/>
    </location>
</feature>
<feature type="binding site" evidence="1">
    <location>
        <begin position="42"/>
        <end position="43"/>
    </location>
    <ligand>
        <name>3-methyl-2-oxobutanoate</name>
        <dbReference type="ChEBI" id="CHEBI:11851"/>
    </ligand>
</feature>
<feature type="binding site" evidence="1">
    <location>
        <position position="42"/>
    </location>
    <ligand>
        <name>Mg(2+)</name>
        <dbReference type="ChEBI" id="CHEBI:18420"/>
    </ligand>
</feature>
<feature type="binding site" evidence="1">
    <location>
        <position position="81"/>
    </location>
    <ligand>
        <name>3-methyl-2-oxobutanoate</name>
        <dbReference type="ChEBI" id="CHEBI:11851"/>
    </ligand>
</feature>
<feature type="binding site" evidence="1">
    <location>
        <position position="81"/>
    </location>
    <ligand>
        <name>Mg(2+)</name>
        <dbReference type="ChEBI" id="CHEBI:18420"/>
    </ligand>
</feature>
<feature type="binding site" evidence="1">
    <location>
        <position position="110"/>
    </location>
    <ligand>
        <name>3-methyl-2-oxobutanoate</name>
        <dbReference type="ChEBI" id="CHEBI:11851"/>
    </ligand>
</feature>
<feature type="binding site" evidence="1">
    <location>
        <position position="112"/>
    </location>
    <ligand>
        <name>Mg(2+)</name>
        <dbReference type="ChEBI" id="CHEBI:18420"/>
    </ligand>
</feature>
<dbReference type="EC" id="2.1.2.11" evidence="1"/>
<dbReference type="EMBL" id="CR628337">
    <property type="protein sequence ID" value="CAH16829.1"/>
    <property type="molecule type" value="Genomic_DNA"/>
</dbReference>
<dbReference type="RefSeq" id="WP_011216531.1">
    <property type="nucleotide sequence ID" value="NC_006369.1"/>
</dbReference>
<dbReference type="SMR" id="Q5WTD7"/>
<dbReference type="KEGG" id="lpf:lpl2588"/>
<dbReference type="LegioList" id="lpl2588"/>
<dbReference type="HOGENOM" id="CLU_036645_1_0_6"/>
<dbReference type="UniPathway" id="UPA00028">
    <property type="reaction ID" value="UER00003"/>
</dbReference>
<dbReference type="Proteomes" id="UP000002517">
    <property type="component" value="Chromosome"/>
</dbReference>
<dbReference type="GO" id="GO:0005737">
    <property type="term" value="C:cytoplasm"/>
    <property type="evidence" value="ECO:0007669"/>
    <property type="project" value="UniProtKB-SubCell"/>
</dbReference>
<dbReference type="GO" id="GO:0003864">
    <property type="term" value="F:3-methyl-2-oxobutanoate hydroxymethyltransferase activity"/>
    <property type="evidence" value="ECO:0007669"/>
    <property type="project" value="UniProtKB-UniRule"/>
</dbReference>
<dbReference type="GO" id="GO:0000287">
    <property type="term" value="F:magnesium ion binding"/>
    <property type="evidence" value="ECO:0007669"/>
    <property type="project" value="TreeGrafter"/>
</dbReference>
<dbReference type="GO" id="GO:0015940">
    <property type="term" value="P:pantothenate biosynthetic process"/>
    <property type="evidence" value="ECO:0007669"/>
    <property type="project" value="UniProtKB-UniRule"/>
</dbReference>
<dbReference type="CDD" id="cd06557">
    <property type="entry name" value="KPHMT-like"/>
    <property type="match status" value="1"/>
</dbReference>
<dbReference type="FunFam" id="3.20.20.60:FF:000003">
    <property type="entry name" value="3-methyl-2-oxobutanoate hydroxymethyltransferase"/>
    <property type="match status" value="1"/>
</dbReference>
<dbReference type="Gene3D" id="3.20.20.60">
    <property type="entry name" value="Phosphoenolpyruvate-binding domains"/>
    <property type="match status" value="1"/>
</dbReference>
<dbReference type="HAMAP" id="MF_00156">
    <property type="entry name" value="PanB"/>
    <property type="match status" value="1"/>
</dbReference>
<dbReference type="InterPro" id="IPR003700">
    <property type="entry name" value="Pantoate_hydroxy_MeTrfase"/>
</dbReference>
<dbReference type="InterPro" id="IPR015813">
    <property type="entry name" value="Pyrv/PenolPyrv_kinase-like_dom"/>
</dbReference>
<dbReference type="InterPro" id="IPR040442">
    <property type="entry name" value="Pyrv_kinase-like_dom_sf"/>
</dbReference>
<dbReference type="NCBIfam" id="TIGR00222">
    <property type="entry name" value="panB"/>
    <property type="match status" value="1"/>
</dbReference>
<dbReference type="NCBIfam" id="NF001452">
    <property type="entry name" value="PRK00311.1"/>
    <property type="match status" value="1"/>
</dbReference>
<dbReference type="PANTHER" id="PTHR20881">
    <property type="entry name" value="3-METHYL-2-OXOBUTANOATE HYDROXYMETHYLTRANSFERASE"/>
    <property type="match status" value="1"/>
</dbReference>
<dbReference type="PANTHER" id="PTHR20881:SF0">
    <property type="entry name" value="3-METHYL-2-OXOBUTANOATE HYDROXYMETHYLTRANSFERASE"/>
    <property type="match status" value="1"/>
</dbReference>
<dbReference type="Pfam" id="PF02548">
    <property type="entry name" value="Pantoate_transf"/>
    <property type="match status" value="1"/>
</dbReference>
<dbReference type="PIRSF" id="PIRSF000388">
    <property type="entry name" value="Pantoate_hydroxy_MeTrfase"/>
    <property type="match status" value="1"/>
</dbReference>
<dbReference type="SUPFAM" id="SSF51621">
    <property type="entry name" value="Phosphoenolpyruvate/pyruvate domain"/>
    <property type="match status" value="1"/>
</dbReference>
<name>PANB_LEGPL</name>
<organism>
    <name type="scientific">Legionella pneumophila (strain Lens)</name>
    <dbReference type="NCBI Taxonomy" id="297245"/>
    <lineage>
        <taxon>Bacteria</taxon>
        <taxon>Pseudomonadati</taxon>
        <taxon>Pseudomonadota</taxon>
        <taxon>Gammaproteobacteria</taxon>
        <taxon>Legionellales</taxon>
        <taxon>Legionellaceae</taxon>
        <taxon>Legionella</taxon>
    </lineage>
</organism>
<keyword id="KW-0963">Cytoplasm</keyword>
<keyword id="KW-0460">Magnesium</keyword>
<keyword id="KW-0479">Metal-binding</keyword>
<keyword id="KW-0566">Pantothenate biosynthesis</keyword>
<keyword id="KW-0808">Transferase</keyword>
<proteinExistence type="inferred from homology"/>